<evidence type="ECO:0000250" key="1"/>
<evidence type="ECO:0000256" key="2">
    <source>
        <dbReference type="SAM" id="MobiDB-lite"/>
    </source>
</evidence>
<evidence type="ECO:0000305" key="3"/>
<keyword id="KW-0507">mRNA processing</keyword>
<keyword id="KW-0508">mRNA splicing</keyword>
<keyword id="KW-0539">Nucleus</keyword>
<keyword id="KW-1185">Reference proteome</keyword>
<keyword id="KW-0694">RNA-binding</keyword>
<keyword id="KW-0747">Spliceosome</keyword>
<comment type="function">
    <text evidence="1">Involved in pre-mRNA splicing. Facilitates the cooperative formation of U2/U6 helix II in association with stem II in the spliceosome. Binds to RNA (By similarity).</text>
</comment>
<comment type="subunit">
    <text evidence="1">Associated with the spliceosome.</text>
</comment>
<comment type="subcellular location">
    <subcellularLocation>
        <location evidence="1">Nucleus</location>
    </subcellularLocation>
</comment>
<comment type="similarity">
    <text evidence="3">Belongs to the SLT11 family.</text>
</comment>
<reference key="1">
    <citation type="journal article" date="2004" name="Nature">
        <title>Genome evolution in yeasts.</title>
        <authorList>
            <person name="Dujon B."/>
            <person name="Sherman D."/>
            <person name="Fischer G."/>
            <person name="Durrens P."/>
            <person name="Casaregola S."/>
            <person name="Lafontaine I."/>
            <person name="de Montigny J."/>
            <person name="Marck C."/>
            <person name="Neuveglise C."/>
            <person name="Talla E."/>
            <person name="Goffard N."/>
            <person name="Frangeul L."/>
            <person name="Aigle M."/>
            <person name="Anthouard V."/>
            <person name="Babour A."/>
            <person name="Barbe V."/>
            <person name="Barnay S."/>
            <person name="Blanchin S."/>
            <person name="Beckerich J.-M."/>
            <person name="Beyne E."/>
            <person name="Bleykasten C."/>
            <person name="Boisrame A."/>
            <person name="Boyer J."/>
            <person name="Cattolico L."/>
            <person name="Confanioleri F."/>
            <person name="de Daruvar A."/>
            <person name="Despons L."/>
            <person name="Fabre E."/>
            <person name="Fairhead C."/>
            <person name="Ferry-Dumazet H."/>
            <person name="Groppi A."/>
            <person name="Hantraye F."/>
            <person name="Hennequin C."/>
            <person name="Jauniaux N."/>
            <person name="Joyet P."/>
            <person name="Kachouri R."/>
            <person name="Kerrest A."/>
            <person name="Koszul R."/>
            <person name="Lemaire M."/>
            <person name="Lesur I."/>
            <person name="Ma L."/>
            <person name="Muller H."/>
            <person name="Nicaud J.-M."/>
            <person name="Nikolski M."/>
            <person name="Oztas S."/>
            <person name="Ozier-Kalogeropoulos O."/>
            <person name="Pellenz S."/>
            <person name="Potier S."/>
            <person name="Richard G.-F."/>
            <person name="Straub M.-L."/>
            <person name="Suleau A."/>
            <person name="Swennen D."/>
            <person name="Tekaia F."/>
            <person name="Wesolowski-Louvel M."/>
            <person name="Westhof E."/>
            <person name="Wirth B."/>
            <person name="Zeniou-Meyer M."/>
            <person name="Zivanovic Y."/>
            <person name="Bolotin-Fukuhara M."/>
            <person name="Thierry A."/>
            <person name="Bouchier C."/>
            <person name="Caudron B."/>
            <person name="Scarpelli C."/>
            <person name="Gaillardin C."/>
            <person name="Weissenbach J."/>
            <person name="Wincker P."/>
            <person name="Souciet J.-L."/>
        </authorList>
    </citation>
    <scope>NUCLEOTIDE SEQUENCE [LARGE SCALE GENOMIC DNA]</scope>
    <source>
        <strain>ATCC 8585 / CBS 2359 / DSM 70799 / NBRC 1267 / NRRL Y-1140 / WM37</strain>
    </source>
</reference>
<organism>
    <name type="scientific">Kluyveromyces lactis (strain ATCC 8585 / CBS 2359 / DSM 70799 / NBRC 1267 / NRRL Y-1140 / WM37)</name>
    <name type="common">Yeast</name>
    <name type="synonym">Candida sphaerica</name>
    <dbReference type="NCBI Taxonomy" id="284590"/>
    <lineage>
        <taxon>Eukaryota</taxon>
        <taxon>Fungi</taxon>
        <taxon>Dikarya</taxon>
        <taxon>Ascomycota</taxon>
        <taxon>Saccharomycotina</taxon>
        <taxon>Saccharomycetes</taxon>
        <taxon>Saccharomycetales</taxon>
        <taxon>Saccharomycetaceae</taxon>
        <taxon>Kluyveromyces</taxon>
    </lineage>
</organism>
<accession>Q6CJI0</accession>
<gene>
    <name type="primary">SLT11</name>
    <name type="ordered locus">KLLA0F18502g</name>
</gene>
<proteinExistence type="inferred from homology"/>
<sequence length="302" mass="34579">MSQDTGELKICERCLPLGENTPTLIRYPNGRECKFCTFPFDSYSYTINHTTFHTICCPKCATKNLICQVCLNDFEHGIPMHLRNSMKQLLNENADSVIPKNDMMKRFIGLSSKQVAPLNIDKLKQAESIRKWRVRELPFNSNVNDTKDTFFLYNIDPNLTESQIVSQLIVATNNNLERENTSLKLNSKLRIATLTFKQDPDLWTQKLISILPKFKVGPTVEKCYLLMKGNRIHITSCLSDDFDVNNVNSEPEWDRLVQKIITKDAKIIGTEPGKKKGKPKSGSKSDLHTKSKSSRRRHTLDL</sequence>
<feature type="chain" id="PRO_0000212428" description="Pre-mRNA-splicing factor SLT11">
    <location>
        <begin position="1"/>
        <end position="302"/>
    </location>
</feature>
<feature type="region of interest" description="Disordered" evidence="2">
    <location>
        <begin position="268"/>
        <end position="302"/>
    </location>
</feature>
<feature type="compositionally biased region" description="Basic residues" evidence="2">
    <location>
        <begin position="290"/>
        <end position="302"/>
    </location>
</feature>
<protein>
    <recommendedName>
        <fullName>Pre-mRNA-splicing factor SLT11</fullName>
    </recommendedName>
</protein>
<name>SLT11_KLULA</name>
<dbReference type="EMBL" id="CR382126">
    <property type="protein sequence ID" value="CAG98617.1"/>
    <property type="molecule type" value="Genomic_DNA"/>
</dbReference>
<dbReference type="RefSeq" id="XP_455909.1">
    <property type="nucleotide sequence ID" value="XM_455909.1"/>
</dbReference>
<dbReference type="SMR" id="Q6CJI0"/>
<dbReference type="FunCoup" id="Q6CJI0">
    <property type="interactions" value="177"/>
</dbReference>
<dbReference type="STRING" id="284590.Q6CJI0"/>
<dbReference type="PaxDb" id="284590-Q6CJI0"/>
<dbReference type="KEGG" id="kla:KLLA0_F18502g"/>
<dbReference type="eggNOG" id="KOG0153">
    <property type="taxonomic scope" value="Eukaryota"/>
</dbReference>
<dbReference type="HOGENOM" id="CLU_027112_1_1_1"/>
<dbReference type="InParanoid" id="Q6CJI0"/>
<dbReference type="OMA" id="IHITSCL"/>
<dbReference type="Proteomes" id="UP000000598">
    <property type="component" value="Chromosome F"/>
</dbReference>
<dbReference type="GO" id="GO:0005681">
    <property type="term" value="C:spliceosomal complex"/>
    <property type="evidence" value="ECO:0007669"/>
    <property type="project" value="UniProtKB-KW"/>
</dbReference>
<dbReference type="GO" id="GO:0003723">
    <property type="term" value="F:RNA binding"/>
    <property type="evidence" value="ECO:0007669"/>
    <property type="project" value="UniProtKB-KW"/>
</dbReference>
<dbReference type="GO" id="GO:0006397">
    <property type="term" value="P:mRNA processing"/>
    <property type="evidence" value="ECO:0007669"/>
    <property type="project" value="UniProtKB-KW"/>
</dbReference>
<dbReference type="GO" id="GO:0008380">
    <property type="term" value="P:RNA splicing"/>
    <property type="evidence" value="ECO:0007669"/>
    <property type="project" value="UniProtKB-KW"/>
</dbReference>
<dbReference type="InterPro" id="IPR048995">
    <property type="entry name" value="STL11/RBM22-like_N"/>
</dbReference>
<dbReference type="InterPro" id="IPR013087">
    <property type="entry name" value="Znf_C2H2_type"/>
</dbReference>
<dbReference type="Pfam" id="PF21369">
    <property type="entry name" value="STL11_N"/>
    <property type="match status" value="1"/>
</dbReference>